<reference key="1">
    <citation type="journal article" date="2016" name="Genome Announc.">
        <title>Complete genome sequence of Alkaliphilus metalliredigens strain QYMF, an alkaliphilic and metal-reducing bacterium isolated from borax-contaminated leachate ponds.</title>
        <authorList>
            <person name="Hwang C."/>
            <person name="Copeland A."/>
            <person name="Lucas S."/>
            <person name="Lapidus A."/>
            <person name="Barry K."/>
            <person name="Detter J.C."/>
            <person name="Glavina Del Rio T."/>
            <person name="Hammon N."/>
            <person name="Israni S."/>
            <person name="Dalin E."/>
            <person name="Tice H."/>
            <person name="Pitluck S."/>
            <person name="Chertkov O."/>
            <person name="Brettin T."/>
            <person name="Bruce D."/>
            <person name="Han C."/>
            <person name="Schmutz J."/>
            <person name="Larimer F."/>
            <person name="Land M.L."/>
            <person name="Hauser L."/>
            <person name="Kyrpides N."/>
            <person name="Mikhailova N."/>
            <person name="Ye Q."/>
            <person name="Zhou J."/>
            <person name="Richardson P."/>
            <person name="Fields M.W."/>
        </authorList>
    </citation>
    <scope>NUCLEOTIDE SEQUENCE [LARGE SCALE GENOMIC DNA]</scope>
    <source>
        <strain>QYMF</strain>
    </source>
</reference>
<proteinExistence type="inferred from homology"/>
<name>RPOA_ALKMQ</name>
<dbReference type="EC" id="2.7.7.6" evidence="1"/>
<dbReference type="EMBL" id="CP000724">
    <property type="protein sequence ID" value="ABR50521.1"/>
    <property type="molecule type" value="Genomic_DNA"/>
</dbReference>
<dbReference type="RefSeq" id="WP_012065413.1">
    <property type="nucleotide sequence ID" value="NC_009633.1"/>
</dbReference>
<dbReference type="SMR" id="A6TWF3"/>
<dbReference type="STRING" id="293826.Amet_4449"/>
<dbReference type="KEGG" id="amt:Amet_4449"/>
<dbReference type="eggNOG" id="COG0202">
    <property type="taxonomic scope" value="Bacteria"/>
</dbReference>
<dbReference type="HOGENOM" id="CLU_053084_0_1_9"/>
<dbReference type="OrthoDB" id="9805706at2"/>
<dbReference type="Proteomes" id="UP000001572">
    <property type="component" value="Chromosome"/>
</dbReference>
<dbReference type="GO" id="GO:0005737">
    <property type="term" value="C:cytoplasm"/>
    <property type="evidence" value="ECO:0007669"/>
    <property type="project" value="UniProtKB-ARBA"/>
</dbReference>
<dbReference type="GO" id="GO:0000428">
    <property type="term" value="C:DNA-directed RNA polymerase complex"/>
    <property type="evidence" value="ECO:0007669"/>
    <property type="project" value="UniProtKB-KW"/>
</dbReference>
<dbReference type="GO" id="GO:0003677">
    <property type="term" value="F:DNA binding"/>
    <property type="evidence" value="ECO:0007669"/>
    <property type="project" value="UniProtKB-UniRule"/>
</dbReference>
<dbReference type="GO" id="GO:0003899">
    <property type="term" value="F:DNA-directed RNA polymerase activity"/>
    <property type="evidence" value="ECO:0007669"/>
    <property type="project" value="UniProtKB-UniRule"/>
</dbReference>
<dbReference type="GO" id="GO:0046983">
    <property type="term" value="F:protein dimerization activity"/>
    <property type="evidence" value="ECO:0007669"/>
    <property type="project" value="InterPro"/>
</dbReference>
<dbReference type="GO" id="GO:0006351">
    <property type="term" value="P:DNA-templated transcription"/>
    <property type="evidence" value="ECO:0007669"/>
    <property type="project" value="UniProtKB-UniRule"/>
</dbReference>
<dbReference type="CDD" id="cd06928">
    <property type="entry name" value="RNAP_alpha_NTD"/>
    <property type="match status" value="1"/>
</dbReference>
<dbReference type="FunFam" id="1.10.150.20:FF:000001">
    <property type="entry name" value="DNA-directed RNA polymerase subunit alpha"/>
    <property type="match status" value="1"/>
</dbReference>
<dbReference type="FunFam" id="2.170.120.12:FF:000001">
    <property type="entry name" value="DNA-directed RNA polymerase subunit alpha"/>
    <property type="match status" value="1"/>
</dbReference>
<dbReference type="Gene3D" id="1.10.150.20">
    <property type="entry name" value="5' to 3' exonuclease, C-terminal subdomain"/>
    <property type="match status" value="1"/>
</dbReference>
<dbReference type="Gene3D" id="2.170.120.12">
    <property type="entry name" value="DNA-directed RNA polymerase, insert domain"/>
    <property type="match status" value="1"/>
</dbReference>
<dbReference type="Gene3D" id="3.30.1360.10">
    <property type="entry name" value="RNA polymerase, RBP11-like subunit"/>
    <property type="match status" value="1"/>
</dbReference>
<dbReference type="HAMAP" id="MF_00059">
    <property type="entry name" value="RNApol_bact_RpoA"/>
    <property type="match status" value="1"/>
</dbReference>
<dbReference type="InterPro" id="IPR011262">
    <property type="entry name" value="DNA-dir_RNA_pol_insert"/>
</dbReference>
<dbReference type="InterPro" id="IPR011263">
    <property type="entry name" value="DNA-dir_RNA_pol_RpoA/D/Rpb3"/>
</dbReference>
<dbReference type="InterPro" id="IPR011773">
    <property type="entry name" value="DNA-dir_RpoA"/>
</dbReference>
<dbReference type="InterPro" id="IPR036603">
    <property type="entry name" value="RBP11-like"/>
</dbReference>
<dbReference type="InterPro" id="IPR011260">
    <property type="entry name" value="RNAP_asu_C"/>
</dbReference>
<dbReference type="InterPro" id="IPR036643">
    <property type="entry name" value="RNApol_insert_sf"/>
</dbReference>
<dbReference type="NCBIfam" id="NF003513">
    <property type="entry name" value="PRK05182.1-2"/>
    <property type="match status" value="1"/>
</dbReference>
<dbReference type="NCBIfam" id="NF003515">
    <property type="entry name" value="PRK05182.2-1"/>
    <property type="match status" value="1"/>
</dbReference>
<dbReference type="NCBIfam" id="NF003516">
    <property type="entry name" value="PRK05182.2-2"/>
    <property type="match status" value="1"/>
</dbReference>
<dbReference type="NCBIfam" id="NF003519">
    <property type="entry name" value="PRK05182.2-5"/>
    <property type="match status" value="1"/>
</dbReference>
<dbReference type="NCBIfam" id="TIGR02027">
    <property type="entry name" value="rpoA"/>
    <property type="match status" value="1"/>
</dbReference>
<dbReference type="Pfam" id="PF01000">
    <property type="entry name" value="RNA_pol_A_bac"/>
    <property type="match status" value="1"/>
</dbReference>
<dbReference type="Pfam" id="PF03118">
    <property type="entry name" value="RNA_pol_A_CTD"/>
    <property type="match status" value="1"/>
</dbReference>
<dbReference type="Pfam" id="PF01193">
    <property type="entry name" value="RNA_pol_L"/>
    <property type="match status" value="1"/>
</dbReference>
<dbReference type="SMART" id="SM00662">
    <property type="entry name" value="RPOLD"/>
    <property type="match status" value="1"/>
</dbReference>
<dbReference type="SUPFAM" id="SSF47789">
    <property type="entry name" value="C-terminal domain of RNA polymerase alpha subunit"/>
    <property type="match status" value="1"/>
</dbReference>
<dbReference type="SUPFAM" id="SSF56553">
    <property type="entry name" value="Insert subdomain of RNA polymerase alpha subunit"/>
    <property type="match status" value="1"/>
</dbReference>
<dbReference type="SUPFAM" id="SSF55257">
    <property type="entry name" value="RBP11-like subunits of RNA polymerase"/>
    <property type="match status" value="1"/>
</dbReference>
<accession>A6TWF3</accession>
<comment type="function">
    <text evidence="1">DNA-dependent RNA polymerase catalyzes the transcription of DNA into RNA using the four ribonucleoside triphosphates as substrates.</text>
</comment>
<comment type="catalytic activity">
    <reaction evidence="1">
        <text>RNA(n) + a ribonucleoside 5'-triphosphate = RNA(n+1) + diphosphate</text>
        <dbReference type="Rhea" id="RHEA:21248"/>
        <dbReference type="Rhea" id="RHEA-COMP:14527"/>
        <dbReference type="Rhea" id="RHEA-COMP:17342"/>
        <dbReference type="ChEBI" id="CHEBI:33019"/>
        <dbReference type="ChEBI" id="CHEBI:61557"/>
        <dbReference type="ChEBI" id="CHEBI:140395"/>
        <dbReference type="EC" id="2.7.7.6"/>
    </reaction>
</comment>
<comment type="subunit">
    <text evidence="1">Homodimer. The RNAP catalytic core consists of 2 alpha, 1 beta, 1 beta' and 1 omega subunit. When a sigma factor is associated with the core the holoenzyme is formed, which can initiate transcription.</text>
</comment>
<comment type="domain">
    <text evidence="1">The N-terminal domain is essential for RNAP assembly and basal transcription, whereas the C-terminal domain is involved in interaction with transcriptional regulators and with upstream promoter elements.</text>
</comment>
<comment type="similarity">
    <text evidence="1">Belongs to the RNA polymerase alpha chain family.</text>
</comment>
<protein>
    <recommendedName>
        <fullName evidence="1">DNA-directed RNA polymerase subunit alpha</fullName>
        <shortName evidence="1">RNAP subunit alpha</shortName>
        <ecNumber evidence="1">2.7.7.6</ecNumber>
    </recommendedName>
    <alternativeName>
        <fullName evidence="1">RNA polymerase subunit alpha</fullName>
    </alternativeName>
    <alternativeName>
        <fullName evidence="1">Transcriptase subunit alpha</fullName>
    </alternativeName>
</protein>
<feature type="chain" id="PRO_1000057406" description="DNA-directed RNA polymerase subunit alpha">
    <location>
        <begin position="1"/>
        <end position="315"/>
    </location>
</feature>
<feature type="region of interest" description="Alpha N-terminal domain (alpha-NTD)" evidence="1">
    <location>
        <begin position="1"/>
        <end position="228"/>
    </location>
</feature>
<feature type="region of interest" description="Alpha C-terminal domain (alpha-CTD)" evidence="1">
    <location>
        <begin position="245"/>
        <end position="315"/>
    </location>
</feature>
<organism>
    <name type="scientific">Alkaliphilus metalliredigens (strain QYMF)</name>
    <dbReference type="NCBI Taxonomy" id="293826"/>
    <lineage>
        <taxon>Bacteria</taxon>
        <taxon>Bacillati</taxon>
        <taxon>Bacillota</taxon>
        <taxon>Clostridia</taxon>
        <taxon>Peptostreptococcales</taxon>
        <taxon>Natronincolaceae</taxon>
        <taxon>Alkaliphilus</taxon>
    </lineage>
</organism>
<gene>
    <name evidence="1" type="primary">rpoA</name>
    <name type="ordered locus">Amet_4449</name>
</gene>
<evidence type="ECO:0000255" key="1">
    <source>
        <dbReference type="HAMAP-Rule" id="MF_00059"/>
    </source>
</evidence>
<sequence>MIEMEKPKVEVFEISDDSTYGKFVVEPLERGYGTTLGNSLRRIMLSSLPGAAVTSVKIEGILHEFSTIPGVKEDVTEIILNLKDLSIGIDGNEPKTLRIEMEGPGTVTAGDIIADADVEVLNPDMYIATLDDNSKLNMEINIAKGRGYVSAENNKTAGMPIGVIPVDSIFTPVRKVSYFVGNTRVGQVTDYDKLEIEVFTDGSIKPDEAISLAAKVMSEHLNLFITLKEDVSDVEIMVQKEEDKKEKVLEMTIEELDLSVRSYNCLKRAGINTVEELSLKSEEDMMKVRNLGKKSLEEVDKKLEELGLGLRPSDE</sequence>
<keyword id="KW-0240">DNA-directed RNA polymerase</keyword>
<keyword id="KW-0548">Nucleotidyltransferase</keyword>
<keyword id="KW-1185">Reference proteome</keyword>
<keyword id="KW-0804">Transcription</keyword>
<keyword id="KW-0808">Transferase</keyword>